<feature type="signal peptide" evidence="2">
    <location>
        <begin position="1"/>
        <end position="27"/>
    </location>
</feature>
<feature type="chain" id="PRO_0000045213" description="Prolactin-5A1">
    <location>
        <begin position="28"/>
        <end position="227"/>
    </location>
</feature>
<feature type="glycosylation site" description="N-linked (GlcNAc...) asparagine" evidence="2">
    <location>
        <position position="47"/>
    </location>
</feature>
<feature type="disulfide bond" evidence="1">
    <location>
        <begin position="85"/>
        <end position="204"/>
    </location>
</feature>
<keyword id="KW-1015">Disulfide bond</keyword>
<keyword id="KW-0325">Glycoprotein</keyword>
<keyword id="KW-0372">Hormone</keyword>
<keyword id="KW-1185">Reference proteome</keyword>
<keyword id="KW-0964">Secreted</keyword>
<keyword id="KW-0732">Signal</keyword>
<dbReference type="EMBL" id="AB022883">
    <property type="protein sequence ID" value="BAA84972.1"/>
    <property type="status" value="ALT_FRAME"/>
    <property type="molecule type" value="mRNA"/>
</dbReference>
<dbReference type="EMBL" id="AF226607">
    <property type="protein sequence ID" value="AAF89996.1"/>
    <property type="molecule type" value="mRNA"/>
</dbReference>
<dbReference type="RefSeq" id="NP_612536.2">
    <property type="nucleotide sequence ID" value="NM_138527.2"/>
</dbReference>
<dbReference type="SMR" id="Q9JII4"/>
<dbReference type="FunCoup" id="Q9JII4">
    <property type="interactions" value="64"/>
</dbReference>
<dbReference type="STRING" id="10116.ENSRNOP00000021982"/>
<dbReference type="GlyCosmos" id="Q9JII4">
    <property type="glycosylation" value="1 site, No reported glycans"/>
</dbReference>
<dbReference type="GlyGen" id="Q9JII4">
    <property type="glycosylation" value="1 site"/>
</dbReference>
<dbReference type="PaxDb" id="10116-ENSRNOP00000021982"/>
<dbReference type="Ensembl" id="ENSRNOT00000117209.1">
    <property type="protein sequence ID" value="ENSRNOP00000086077.1"/>
    <property type="gene ID" value="ENSRNOG00000016307.7"/>
</dbReference>
<dbReference type="GeneID" id="171556"/>
<dbReference type="KEGG" id="rno:171556"/>
<dbReference type="UCSC" id="RGD:620120">
    <property type="organism name" value="rat"/>
</dbReference>
<dbReference type="AGR" id="RGD:620120"/>
<dbReference type="CTD" id="28078"/>
<dbReference type="RGD" id="620120">
    <property type="gene designation" value="Prl5a1"/>
</dbReference>
<dbReference type="eggNOG" id="ENOG502QYU3">
    <property type="taxonomic scope" value="Eukaryota"/>
</dbReference>
<dbReference type="GeneTree" id="ENSGT00950000182818"/>
<dbReference type="HOGENOM" id="CLU_088274_0_1_1"/>
<dbReference type="InParanoid" id="Q9JII4"/>
<dbReference type="OrthoDB" id="9586412at2759"/>
<dbReference type="PhylomeDB" id="Q9JII4"/>
<dbReference type="TreeFam" id="TF332592"/>
<dbReference type="PRO" id="PR:Q9JII4"/>
<dbReference type="Proteomes" id="UP000002494">
    <property type="component" value="Chromosome 17"/>
</dbReference>
<dbReference type="ExpressionAtlas" id="Q9JII4">
    <property type="expression patterns" value="baseline and differential"/>
</dbReference>
<dbReference type="GO" id="GO:0005615">
    <property type="term" value="C:extracellular space"/>
    <property type="evidence" value="ECO:0000318"/>
    <property type="project" value="GO_Central"/>
</dbReference>
<dbReference type="GO" id="GO:0005179">
    <property type="term" value="F:hormone activity"/>
    <property type="evidence" value="ECO:0000318"/>
    <property type="project" value="GO_Central"/>
</dbReference>
<dbReference type="GO" id="GO:0005148">
    <property type="term" value="F:prolactin receptor binding"/>
    <property type="evidence" value="ECO:0000318"/>
    <property type="project" value="GO_Central"/>
</dbReference>
<dbReference type="GO" id="GO:0007166">
    <property type="term" value="P:cell surface receptor signaling pathway"/>
    <property type="evidence" value="ECO:0000318"/>
    <property type="project" value="GO_Central"/>
</dbReference>
<dbReference type="GO" id="GO:0007565">
    <property type="term" value="P:female pregnancy"/>
    <property type="evidence" value="ECO:0000318"/>
    <property type="project" value="GO_Central"/>
</dbReference>
<dbReference type="GO" id="GO:0030879">
    <property type="term" value="P:mammary gland development"/>
    <property type="evidence" value="ECO:0000318"/>
    <property type="project" value="GO_Central"/>
</dbReference>
<dbReference type="GO" id="GO:1903489">
    <property type="term" value="P:positive regulation of lactation"/>
    <property type="evidence" value="ECO:0000318"/>
    <property type="project" value="GO_Central"/>
</dbReference>
<dbReference type="GO" id="GO:0046427">
    <property type="term" value="P:positive regulation of receptor signaling pathway via JAK-STAT"/>
    <property type="evidence" value="ECO:0000318"/>
    <property type="project" value="GO_Central"/>
</dbReference>
<dbReference type="GO" id="GO:0031667">
    <property type="term" value="P:response to nutrient levels"/>
    <property type="evidence" value="ECO:0000318"/>
    <property type="project" value="GO_Central"/>
</dbReference>
<dbReference type="FunFam" id="1.20.1250.10:FF:000073">
    <property type="entry name" value="Growth hormone d24"/>
    <property type="match status" value="1"/>
</dbReference>
<dbReference type="Gene3D" id="1.20.1250.10">
    <property type="match status" value="1"/>
</dbReference>
<dbReference type="InterPro" id="IPR009079">
    <property type="entry name" value="4_helix_cytokine-like_core"/>
</dbReference>
<dbReference type="InterPro" id="IPR001400">
    <property type="entry name" value="Somatotropin/Prolactin"/>
</dbReference>
<dbReference type="PANTHER" id="PTHR11417:SF7">
    <property type="entry name" value="PROLACTIN-5A1"/>
    <property type="match status" value="1"/>
</dbReference>
<dbReference type="PANTHER" id="PTHR11417">
    <property type="entry name" value="SOMATOTROPIN,PROLACTIN"/>
    <property type="match status" value="1"/>
</dbReference>
<dbReference type="Pfam" id="PF00103">
    <property type="entry name" value="Hormone_1"/>
    <property type="match status" value="1"/>
</dbReference>
<dbReference type="PRINTS" id="PR00836">
    <property type="entry name" value="SOMATOTROPIN"/>
</dbReference>
<dbReference type="SUPFAM" id="SSF47266">
    <property type="entry name" value="4-helical cytokines"/>
    <property type="match status" value="1"/>
</dbReference>
<organism>
    <name type="scientific">Rattus norvegicus</name>
    <name type="common">Rat</name>
    <dbReference type="NCBI Taxonomy" id="10116"/>
    <lineage>
        <taxon>Eukaryota</taxon>
        <taxon>Metazoa</taxon>
        <taxon>Chordata</taxon>
        <taxon>Craniata</taxon>
        <taxon>Vertebrata</taxon>
        <taxon>Euteleostomi</taxon>
        <taxon>Mammalia</taxon>
        <taxon>Eutheria</taxon>
        <taxon>Euarchontoglires</taxon>
        <taxon>Glires</taxon>
        <taxon>Rodentia</taxon>
        <taxon>Myomorpha</taxon>
        <taxon>Muroidea</taxon>
        <taxon>Muridae</taxon>
        <taxon>Murinae</taxon>
        <taxon>Rattus</taxon>
    </lineage>
</organism>
<sequence>MQIQPHPSGALLLLLLSNLLMWENVASVPRCIMENGGCQKVLNYLFNMTSTISESFNTLSSETLNDFYTEFDPHQTFQNRPAMTCHTSSRSIPNNKRKAERMEPAALLNVIIRMLASWKNLLYHVENNMANLDGTPYAIISKVKLIDRQIKKLTKNLQDIKTILSQVHPELKEKENYPVWSGEPYVQKSKRRTQLFGLHSLFFCLYSDAEKVSDYVNILRNKIVPNE</sequence>
<name>PR5A1_RAT</name>
<protein>
    <recommendedName>
        <fullName>Prolactin-5A1</fullName>
    </recommendedName>
    <alternativeName>
        <fullName>Placental prolactin-like protein L</fullName>
        <shortName>PLP-L</shortName>
        <shortName>PRL-like protein L</shortName>
    </alternativeName>
</protein>
<reference key="1">
    <citation type="journal article" date="1999" name="Biochem. Biophys. Res. Commun.">
        <title>Identification of four members of the rat prolactin/growth hormone gene family.</title>
        <authorList>
            <person name="Ishibashi K."/>
            <person name="Imai M."/>
        </authorList>
    </citation>
    <scope>NUCLEOTIDE SEQUENCE [MRNA]</scope>
</reference>
<reference key="2">
    <citation type="journal article" date="2000" name="Biol. Reprod.">
        <title>Identification of three prolactin-related hormones as markers of invasive trophoblasts in the rat.</title>
        <authorList>
            <person name="Toft D.J."/>
            <person name="Linzer D.I.H."/>
        </authorList>
    </citation>
    <scope>NUCLEOTIDE SEQUENCE [MRNA]</scope>
    <scope>TISSUE SPECIFICITY</scope>
    <scope>DEVELOPMENTAL STAGE</scope>
    <source>
        <strain>Sprague-Dawley</strain>
    </source>
</reference>
<accession>Q9JII4</accession>
<accession>Q9R0R7</accession>
<evidence type="ECO:0000250" key="1"/>
<evidence type="ECO:0000255" key="2"/>
<evidence type="ECO:0000269" key="3">
    <source>
    </source>
</evidence>
<evidence type="ECO:0000305" key="4"/>
<comment type="subcellular location">
    <subcellularLocation>
        <location evidence="1">Secreted</location>
    </subcellularLocation>
</comment>
<comment type="tissue specificity">
    <text evidence="3">Expressed specifically in placenta. Highly expressed in invasive trophoblast cells lining the central placental vessel.</text>
</comment>
<comment type="developmental stage">
    <text evidence="3">Highest levels are observed from day 11 to day 20, with peak levels on day 13.</text>
</comment>
<comment type="similarity">
    <text evidence="4">Belongs to the somatotropin/prolactin family.</text>
</comment>
<comment type="sequence caution" evidence="4">
    <conflict type="frameshift">
        <sequence resource="EMBL-CDS" id="BAA84972"/>
    </conflict>
</comment>
<gene>
    <name type="primary">Prl5a1</name>
    <name type="synonym">Prlpl</name>
</gene>
<proteinExistence type="evidence at transcript level"/>